<proteinExistence type="evidence at transcript level"/>
<reference key="1">
    <citation type="journal article" date="2002" name="Nature">
        <title>The genome sequence of Schizosaccharomyces pombe.</title>
        <authorList>
            <person name="Wood V."/>
            <person name="Gwilliam R."/>
            <person name="Rajandream M.A."/>
            <person name="Lyne M.H."/>
            <person name="Lyne R."/>
            <person name="Stewart A."/>
            <person name="Sgouros J.G."/>
            <person name="Peat N."/>
            <person name="Hayles J."/>
            <person name="Baker S.G."/>
            <person name="Basham D."/>
            <person name="Bowman S."/>
            <person name="Brooks K."/>
            <person name="Brown D."/>
            <person name="Brown S."/>
            <person name="Chillingworth T."/>
            <person name="Churcher C.M."/>
            <person name="Collins M."/>
            <person name="Connor R."/>
            <person name="Cronin A."/>
            <person name="Davis P."/>
            <person name="Feltwell T."/>
            <person name="Fraser A."/>
            <person name="Gentles S."/>
            <person name="Goble A."/>
            <person name="Hamlin N."/>
            <person name="Harris D.E."/>
            <person name="Hidalgo J."/>
            <person name="Hodgson G."/>
            <person name="Holroyd S."/>
            <person name="Hornsby T."/>
            <person name="Howarth S."/>
            <person name="Huckle E.J."/>
            <person name="Hunt S."/>
            <person name="Jagels K."/>
            <person name="James K.D."/>
            <person name="Jones L."/>
            <person name="Jones M."/>
            <person name="Leather S."/>
            <person name="McDonald S."/>
            <person name="McLean J."/>
            <person name="Mooney P."/>
            <person name="Moule S."/>
            <person name="Mungall K.L."/>
            <person name="Murphy L.D."/>
            <person name="Niblett D."/>
            <person name="Odell C."/>
            <person name="Oliver K."/>
            <person name="O'Neil S."/>
            <person name="Pearson D."/>
            <person name="Quail M.A."/>
            <person name="Rabbinowitsch E."/>
            <person name="Rutherford K.M."/>
            <person name="Rutter S."/>
            <person name="Saunders D."/>
            <person name="Seeger K."/>
            <person name="Sharp S."/>
            <person name="Skelton J."/>
            <person name="Simmonds M.N."/>
            <person name="Squares R."/>
            <person name="Squares S."/>
            <person name="Stevens K."/>
            <person name="Taylor K."/>
            <person name="Taylor R.G."/>
            <person name="Tivey A."/>
            <person name="Walsh S.V."/>
            <person name="Warren T."/>
            <person name="Whitehead S."/>
            <person name="Woodward J.R."/>
            <person name="Volckaert G."/>
            <person name="Aert R."/>
            <person name="Robben J."/>
            <person name="Grymonprez B."/>
            <person name="Weltjens I."/>
            <person name="Vanstreels E."/>
            <person name="Rieger M."/>
            <person name="Schaefer M."/>
            <person name="Mueller-Auer S."/>
            <person name="Gabel C."/>
            <person name="Fuchs M."/>
            <person name="Duesterhoeft A."/>
            <person name="Fritzc C."/>
            <person name="Holzer E."/>
            <person name="Moestl D."/>
            <person name="Hilbert H."/>
            <person name="Borzym K."/>
            <person name="Langer I."/>
            <person name="Beck A."/>
            <person name="Lehrach H."/>
            <person name="Reinhardt R."/>
            <person name="Pohl T.M."/>
            <person name="Eger P."/>
            <person name="Zimmermann W."/>
            <person name="Wedler H."/>
            <person name="Wambutt R."/>
            <person name="Purnelle B."/>
            <person name="Goffeau A."/>
            <person name="Cadieu E."/>
            <person name="Dreano S."/>
            <person name="Gloux S."/>
            <person name="Lelaure V."/>
            <person name="Mottier S."/>
            <person name="Galibert F."/>
            <person name="Aves S.J."/>
            <person name="Xiang Z."/>
            <person name="Hunt C."/>
            <person name="Moore K."/>
            <person name="Hurst S.M."/>
            <person name="Lucas M."/>
            <person name="Rochet M."/>
            <person name="Gaillardin C."/>
            <person name="Tallada V.A."/>
            <person name="Garzon A."/>
            <person name="Thode G."/>
            <person name="Daga R.R."/>
            <person name="Cruzado L."/>
            <person name="Jimenez J."/>
            <person name="Sanchez M."/>
            <person name="del Rey F."/>
            <person name="Benito J."/>
            <person name="Dominguez A."/>
            <person name="Revuelta J.L."/>
            <person name="Moreno S."/>
            <person name="Armstrong J."/>
            <person name="Forsburg S.L."/>
            <person name="Cerutti L."/>
            <person name="Lowe T."/>
            <person name="McCombie W.R."/>
            <person name="Paulsen I."/>
            <person name="Potashkin J."/>
            <person name="Shpakovski G.V."/>
            <person name="Ussery D."/>
            <person name="Barrell B.G."/>
            <person name="Nurse P."/>
        </authorList>
    </citation>
    <scope>NUCLEOTIDE SEQUENCE [LARGE SCALE GENOMIC DNA]</scope>
    <source>
        <strain>972 / ATCC 24843</strain>
    </source>
</reference>
<reference key="2">
    <citation type="journal article" date="2011" name="Genetics">
        <title>Augmented annotation of the Schizosaccharomyces pombe genome reveals additional genes required for growth and viability.</title>
        <authorList>
            <person name="Bitton D.A."/>
            <person name="Wood V."/>
            <person name="Scutt P.J."/>
            <person name="Grallert A."/>
            <person name="Yates T."/>
            <person name="Smith D.L."/>
            <person name="Hagan I.M."/>
            <person name="Miller C.J."/>
        </authorList>
    </citation>
    <scope>IDENTIFICATION</scope>
    <scope>INDUCTION</scope>
</reference>
<feature type="chain" id="PRO_0000416523" description="Protein tam14">
    <location>
        <begin position="1"/>
        <end position="70"/>
    </location>
</feature>
<feature type="transmembrane region" description="Helical" evidence="2">
    <location>
        <begin position="45"/>
        <end position="65"/>
    </location>
</feature>
<feature type="region of interest" description="Disordered" evidence="3">
    <location>
        <begin position="1"/>
        <end position="20"/>
    </location>
</feature>
<feature type="compositionally biased region" description="Polar residues" evidence="3">
    <location>
        <begin position="1"/>
        <end position="19"/>
    </location>
</feature>
<evidence type="ECO:0000250" key="1">
    <source>
        <dbReference type="UniProtKB" id="Q9R2C1"/>
    </source>
</evidence>
<evidence type="ECO:0000255" key="2"/>
<evidence type="ECO:0000256" key="3">
    <source>
        <dbReference type="SAM" id="MobiDB-lite"/>
    </source>
</evidence>
<evidence type="ECO:0000269" key="4">
    <source>
    </source>
</evidence>
<evidence type="ECO:0000305" key="5"/>
<protein>
    <recommendedName>
        <fullName>Protein tam14</fullName>
    </recommendedName>
    <alternativeName>
        <fullName>Transcripts altered in meiosis protein 14</fullName>
    </alternativeName>
</protein>
<comment type="function">
    <text evidence="1">Interacts with target proteins during their translocation into the lumen of the endoplasmic reticulum. Protects unfolded target proteins against degradation during ER stress. May facilitate glycosylation of target proteins after termination of ER stress.</text>
</comment>
<comment type="subcellular location">
    <subcellularLocation>
        <location evidence="1">Membrane</location>
        <topology evidence="1">Single-pass membrane protein</topology>
    </subcellularLocation>
    <subcellularLocation>
        <location evidence="1">Endoplasmic reticulum membrane</location>
        <topology evidence="1">Single-pass membrane protein</topology>
    </subcellularLocation>
</comment>
<comment type="induction">
    <text evidence="4">Differentially expressed during meiosis.</text>
</comment>
<comment type="similarity">
    <text evidence="5">Belongs to the RAMP4 family.</text>
</comment>
<organism>
    <name type="scientific">Schizosaccharomyces pombe (strain 972 / ATCC 24843)</name>
    <name type="common">Fission yeast</name>
    <dbReference type="NCBI Taxonomy" id="284812"/>
    <lineage>
        <taxon>Eukaryota</taxon>
        <taxon>Fungi</taxon>
        <taxon>Dikarya</taxon>
        <taxon>Ascomycota</taxon>
        <taxon>Taphrinomycotina</taxon>
        <taxon>Schizosaccharomycetes</taxon>
        <taxon>Schizosaccharomycetales</taxon>
        <taxon>Schizosaccharomycetaceae</taxon>
        <taxon>Schizosaccharomyces</taxon>
    </lineage>
</organism>
<keyword id="KW-0256">Endoplasmic reticulum</keyword>
<keyword id="KW-0472">Membrane</keyword>
<keyword id="KW-1185">Reference proteome</keyword>
<keyword id="KW-0812">Transmembrane</keyword>
<keyword id="KW-1133">Transmembrane helix</keyword>
<keyword id="KW-0834">Unfolded protein response</keyword>
<accession>G2TRT3</accession>
<dbReference type="EMBL" id="CU329672">
    <property type="protein sequence ID" value="CCD31387.1"/>
    <property type="molecule type" value="Genomic_DNA"/>
</dbReference>
<dbReference type="RefSeq" id="XP_004001737.1">
    <property type="nucleotide sequence ID" value="XM_004001688.1"/>
</dbReference>
<dbReference type="SMR" id="G2TRT3"/>
<dbReference type="BioGRID" id="4253622">
    <property type="interactions" value="3"/>
</dbReference>
<dbReference type="STRING" id="284812.G2TRT3"/>
<dbReference type="iPTMnet" id="G2TRT3"/>
<dbReference type="PaxDb" id="4896-SPCC330.20.1"/>
<dbReference type="EnsemblFungi" id="SPCC330.20.1">
    <property type="protein sequence ID" value="SPCC330.20.1:pep"/>
    <property type="gene ID" value="SPCC330.20"/>
</dbReference>
<dbReference type="PomBase" id="SPCC330.20">
    <property type="gene designation" value="tam14"/>
</dbReference>
<dbReference type="VEuPathDB" id="FungiDB:SPCC330.20"/>
<dbReference type="HOGENOM" id="CLU_182424_0_1_1"/>
<dbReference type="InParanoid" id="G2TRT3"/>
<dbReference type="OMA" id="RANTQFQ"/>
<dbReference type="PRO" id="PR:G2TRT3"/>
<dbReference type="Proteomes" id="UP000002485">
    <property type="component" value="Chromosome III"/>
</dbReference>
<dbReference type="GO" id="GO:0005783">
    <property type="term" value="C:endoplasmic reticulum"/>
    <property type="evidence" value="ECO:0000266"/>
    <property type="project" value="PomBase"/>
</dbReference>
<dbReference type="GO" id="GO:0005789">
    <property type="term" value="C:endoplasmic reticulum membrane"/>
    <property type="evidence" value="ECO:0007669"/>
    <property type="project" value="UniProtKB-SubCell"/>
</dbReference>
<dbReference type="GO" id="GO:0006986">
    <property type="term" value="P:response to unfolded protein"/>
    <property type="evidence" value="ECO:0007669"/>
    <property type="project" value="UniProtKB-KW"/>
</dbReference>
<dbReference type="InterPro" id="IPR010580">
    <property type="entry name" value="ER_stress-assoc"/>
</dbReference>
<dbReference type="Pfam" id="PF06624">
    <property type="entry name" value="RAMP4"/>
    <property type="match status" value="1"/>
</dbReference>
<name>TAM14_SCHPO</name>
<sequence>MPTVQTPSQRRANTQFQKNITRRVKTNSKERYVAKHPPTKIPRNIAMFFILLMSGGIILGILRFLLTFFS</sequence>
<gene>
    <name type="primary">tam14</name>
    <name type="ORF">SPCC330.20</name>
</gene>